<accession>P28798</accession>
<proteinExistence type="evidence at protein level"/>
<organism>
    <name type="scientific">Mus musculus</name>
    <name type="common">Mouse</name>
    <dbReference type="NCBI Taxonomy" id="10090"/>
    <lineage>
        <taxon>Eukaryota</taxon>
        <taxon>Metazoa</taxon>
        <taxon>Chordata</taxon>
        <taxon>Craniata</taxon>
        <taxon>Vertebrata</taxon>
        <taxon>Euteleostomi</taxon>
        <taxon>Mammalia</taxon>
        <taxon>Eutheria</taxon>
        <taxon>Euarchontoglires</taxon>
        <taxon>Glires</taxon>
        <taxon>Rodentia</taxon>
        <taxon>Myomorpha</taxon>
        <taxon>Muroidea</taxon>
        <taxon>Muridae</taxon>
        <taxon>Murinae</taxon>
        <taxon>Mus</taxon>
        <taxon>Mus</taxon>
    </lineage>
</organism>
<feature type="signal peptide" evidence="18">
    <location>
        <begin position="1"/>
        <end position="17"/>
    </location>
</feature>
<feature type="chain" id="PRO_0000012702" description="Paragranulin">
    <location>
        <begin position="18"/>
        <end position="589"/>
    </location>
</feature>
<feature type="peptide" id="PRO_0000446331" description="Paragranulin" evidence="1">
    <location>
        <begin position="18"/>
        <end position="47"/>
    </location>
</feature>
<feature type="peptide" id="PRO_0000012703" description="Granulin-1">
    <location>
        <begin position="58" status="uncertain"/>
        <end position="113" status="uncertain"/>
    </location>
</feature>
<feature type="peptide" id="PRO_0000012704" description="Granulin-2">
    <location>
        <begin position="122" status="uncertain"/>
        <end position="178" status="uncertain"/>
    </location>
</feature>
<feature type="peptide" id="PRO_0000012705" description="Granulin-3">
    <location>
        <begin position="205"/>
        <end position="260"/>
    </location>
</feature>
<feature type="peptide" id="PRO_0000012706" description="Granulin-4">
    <location>
        <begin position="280"/>
        <end position="334"/>
    </location>
</feature>
<feature type="peptide" id="PRO_0000012707" description="Granulin-5">
    <location>
        <begin position="362"/>
        <end position="414" status="uncertain"/>
    </location>
</feature>
<feature type="peptide" id="PRO_0000012708" description="Granulin-6">
    <location>
        <begin position="440"/>
        <end position="493" status="uncertain"/>
    </location>
</feature>
<feature type="peptide" id="PRO_0000012709" description="Granulin-7">
    <location>
        <begin position="517" status="uncertain"/>
        <end position="568" status="uncertain"/>
    </location>
</feature>
<feature type="glycosylation site" description="N-linked (GlcNAc...) asparagine" evidence="2">
    <location>
        <position position="38"/>
    </location>
</feature>
<feature type="glycosylation site" description="N-linked (GlcNAc...) asparagine" evidence="2">
    <location>
        <position position="263"/>
    </location>
</feature>
<feature type="glycosylation site" description="N-linked (GlcNAc...) asparagine" evidence="2">
    <location>
        <position position="373"/>
    </location>
</feature>
<feature type="glycosylation site" description="N-linked (GlcNAc...) asparagine" evidence="2">
    <location>
        <position position="526"/>
    </location>
</feature>
<feature type="disulfide bond" evidence="1">
    <location>
        <begin position="125"/>
        <end position="138"/>
    </location>
</feature>
<feature type="disulfide bond" evidence="1">
    <location>
        <begin position="132"/>
        <end position="148"/>
    </location>
</feature>
<feature type="disulfide bond" evidence="1">
    <location>
        <begin position="282"/>
        <end position="294"/>
    </location>
</feature>
<feature type="disulfide bond" evidence="1">
    <location>
        <begin position="288"/>
        <end position="304"/>
    </location>
</feature>
<feature type="disulfide bond" evidence="1">
    <location>
        <begin position="295"/>
        <end position="312"/>
    </location>
</feature>
<feature type="disulfide bond" evidence="1">
    <location>
        <begin position="305"/>
        <end position="319"/>
    </location>
</feature>
<feature type="disulfide bond" evidence="1">
    <location>
        <begin position="313"/>
        <end position="326"/>
    </location>
</feature>
<feature type="disulfide bond" evidence="1">
    <location>
        <begin position="320"/>
        <end position="333"/>
    </location>
</feature>
<feature type="disulfide bond" evidence="1">
    <location>
        <begin position="364"/>
        <end position="376"/>
    </location>
</feature>
<feature type="disulfide bond" evidence="1">
    <location>
        <begin position="370"/>
        <end position="386"/>
    </location>
</feature>
<feature type="disulfide bond" evidence="1">
    <location>
        <begin position="395"/>
        <end position="408"/>
    </location>
</feature>
<feature type="disulfide bond" evidence="1">
    <location>
        <begin position="402"/>
        <end position="414"/>
    </location>
</feature>
<feature type="sequence conflict" description="In Ref. 3; AAA37191." evidence="23" ref="3">
    <original>V</original>
    <variation>L</variation>
    <location>
        <position position="251"/>
    </location>
</feature>
<feature type="sequence conflict" description="In Ref. 3; AAA37191." evidence="23" ref="3">
    <original>L</original>
    <variation>V</variation>
    <location>
        <position position="254"/>
    </location>
</feature>
<feature type="sequence conflict" description="In Ref. 4; AA sequence." evidence="23" ref="4">
    <original>SKN</original>
    <variation>YD</variation>
    <location>
        <begin position="261"/>
        <end position="263"/>
    </location>
</feature>
<feature type="sequence conflict" description="In Ref. 2; CAA44197." evidence="23" ref="2">
    <original>L</original>
    <variation>R</variation>
    <location>
        <position position="350"/>
    </location>
</feature>
<feature type="sequence conflict" description="In Ref. 3; AAA37191." evidence="23" ref="3">
    <original>CP</original>
    <variation>SA</variation>
    <location>
        <begin position="402"/>
        <end position="403"/>
    </location>
</feature>
<gene>
    <name type="primary">Grn</name>
</gene>
<keyword id="KW-0202">Cytokine</keyword>
<keyword id="KW-0903">Direct protein sequencing</keyword>
<keyword id="KW-1015">Disulfide bond</keyword>
<keyword id="KW-0325">Glycoprotein</keyword>
<keyword id="KW-0458">Lysosome</keyword>
<keyword id="KW-1185">Reference proteome</keyword>
<keyword id="KW-0677">Repeat</keyword>
<keyword id="KW-0964">Secreted</keyword>
<keyword id="KW-0732">Signal</keyword>
<sequence length="589" mass="63458">MWVLMSWLAFAAGLVAGTQCPDGQFCPVACCLDQGGANYSCCNPLLDTWPRITSHHLDGSCQTHGHCPAGYSCLLTVSGTSSCCPFSKGVSCGDGYHCCPQGFHCSADGKSCFQMSDNPLGAVQCPGSQFECPDSATCCIMVDGSWGCCPMPQASCCEDRVHCCPHGASCDLVHTRCVSPTGTHTLLKKFPAQKTNRAVSLPFSVVCPDAKTQCPDDSTCCELPTGKYGCCPMPNAICCSDHLHCCPQDTVCDLIQSKCLSKNYTTDLLTKLPGYPVKEVKCDMEVSCPEGYTCCRLNTGAWGCCPFAKAVCCEDHIHCCPAGFQCHTEKGTCEMGILQVPWMKKVIAPLRLPDPQILKSDTPCDDFTRCPTNNTCCKLNSGDWGCCPIPEAVCCSDNQHCCPQGFTCLAQGYCQKGDTMVAGLEKIPARQTTPLQIGDIGCDQHTSCPVGQTCCPSLKGSWACCQLPHAVCCEDRQHCCPAGYTCNVKARTCEKDVDFIQPPVLLTLGPKVGNVECGEGHFCHDNQTCCKDSAGVWACCPYLKGVCCRDGRHCCPGGFHCSARGTKCLRKKIPRWDMFLRDPVPRPLL</sequence>
<evidence type="ECO:0000250" key="1">
    <source>
        <dbReference type="UniProtKB" id="P28799"/>
    </source>
</evidence>
<evidence type="ECO:0000255" key="2"/>
<evidence type="ECO:0000269" key="3">
    <source>
    </source>
</evidence>
<evidence type="ECO:0000269" key="4">
    <source>
    </source>
</evidence>
<evidence type="ECO:0000269" key="5">
    <source>
    </source>
</evidence>
<evidence type="ECO:0000269" key="6">
    <source>
    </source>
</evidence>
<evidence type="ECO:0000269" key="7">
    <source>
    </source>
</evidence>
<evidence type="ECO:0000269" key="8">
    <source>
    </source>
</evidence>
<evidence type="ECO:0000269" key="9">
    <source>
    </source>
</evidence>
<evidence type="ECO:0000269" key="10">
    <source>
    </source>
</evidence>
<evidence type="ECO:0000269" key="11">
    <source>
    </source>
</evidence>
<evidence type="ECO:0000269" key="12">
    <source>
    </source>
</evidence>
<evidence type="ECO:0000269" key="13">
    <source>
    </source>
</evidence>
<evidence type="ECO:0000269" key="14">
    <source>
    </source>
</evidence>
<evidence type="ECO:0000269" key="15">
    <source>
    </source>
</evidence>
<evidence type="ECO:0000269" key="16">
    <source>
    </source>
</evidence>
<evidence type="ECO:0000269" key="17">
    <source>
    </source>
</evidence>
<evidence type="ECO:0000269" key="18">
    <source>
    </source>
</evidence>
<evidence type="ECO:0000303" key="19">
    <source>
    </source>
</evidence>
<evidence type="ECO:0000303" key="20">
    <source>
    </source>
</evidence>
<evidence type="ECO:0000303" key="21">
    <source>
    </source>
</evidence>
<evidence type="ECO:0000303" key="22">
    <source>
    </source>
</evidence>
<evidence type="ECO:0000305" key="23"/>
<evidence type="ECO:0000305" key="24">
    <source>
    </source>
</evidence>
<protein>
    <recommendedName>
        <fullName evidence="19">Progranulin</fullName>
        <shortName evidence="1">PGRN</shortName>
    </recommendedName>
    <alternativeName>
        <fullName evidence="21">Acrogranin</fullName>
    </alternativeName>
    <alternativeName>
        <fullName evidence="21">Epithelin/granulin precursor</fullName>
    </alternativeName>
    <alternativeName>
        <fullName evidence="24">Glycoprotein of 88 Kda</fullName>
        <shortName>GP88</shortName>
        <shortName>Glycoprotein 88</shortName>
    </alternativeName>
    <alternativeName>
        <fullName evidence="22">PC cell-derived growth factor</fullName>
        <shortName evidence="22">PCDGF</shortName>
    </alternativeName>
    <alternativeName>
        <fullName evidence="20">Proepithelin</fullName>
        <shortName evidence="1">PEPI</shortName>
    </alternativeName>
    <component>
        <recommendedName>
            <fullName>Paragranulin</fullName>
        </recommendedName>
    </component>
    <component>
        <recommendedName>
            <fullName>Granulin-1</fullName>
        </recommendedName>
    </component>
    <component>
        <recommendedName>
            <fullName>Granulin-2</fullName>
        </recommendedName>
    </component>
    <component>
        <recommendedName>
            <fullName>Granulin-3</fullName>
        </recommendedName>
    </component>
    <component>
        <recommendedName>
            <fullName>Granulin-4</fullName>
        </recommendedName>
    </component>
    <component>
        <recommendedName>
            <fullName>Granulin-5</fullName>
        </recommendedName>
    </component>
    <component>
        <recommendedName>
            <fullName>Granulin-6</fullName>
        </recommendedName>
    </component>
    <component>
        <recommendedName>
            <fullName>Granulin-7</fullName>
        </recommendedName>
    </component>
</protein>
<dbReference type="EMBL" id="D16195">
    <property type="protein sequence ID" value="BAA03736.1"/>
    <property type="molecule type" value="Genomic_DNA"/>
</dbReference>
<dbReference type="EMBL" id="M86736">
    <property type="protein sequence ID" value="AAA37191.1"/>
    <property type="molecule type" value="mRNA"/>
</dbReference>
<dbReference type="EMBL" id="X62321">
    <property type="protein sequence ID" value="CAA44197.1"/>
    <property type="molecule type" value="mRNA"/>
</dbReference>
<dbReference type="PIR" id="C38128">
    <property type="entry name" value="C38128"/>
</dbReference>
<dbReference type="RefSeq" id="NP_032201.3">
    <property type="nucleotide sequence ID" value="NM_008175.5"/>
</dbReference>
<dbReference type="SMR" id="P28798"/>
<dbReference type="FunCoup" id="P28798">
    <property type="interactions" value="433"/>
</dbReference>
<dbReference type="IntAct" id="P28798">
    <property type="interactions" value="8"/>
</dbReference>
<dbReference type="MINT" id="P28798"/>
<dbReference type="STRING" id="10090.ENSMUSP00000046340"/>
<dbReference type="GlyCosmos" id="P28798">
    <property type="glycosylation" value="4 sites, No reported glycans"/>
</dbReference>
<dbReference type="GlyGen" id="P28798">
    <property type="glycosylation" value="6 sites, 2 N-linked glycans (3 sites), 1 O-linked glycan (1 site)"/>
</dbReference>
<dbReference type="iPTMnet" id="P28798"/>
<dbReference type="PhosphoSitePlus" id="P28798"/>
<dbReference type="CPTAC" id="non-CPTAC-3399"/>
<dbReference type="CPTAC" id="non-CPTAC-3917"/>
<dbReference type="jPOST" id="P28798"/>
<dbReference type="PaxDb" id="10090-ENSMUSP00000046340"/>
<dbReference type="PeptideAtlas" id="P28798"/>
<dbReference type="ProteomicsDB" id="269840"/>
<dbReference type="Pumba" id="P28798"/>
<dbReference type="Antibodypedia" id="1406">
    <property type="antibodies" value="663 antibodies from 37 providers"/>
</dbReference>
<dbReference type="DNASU" id="14824"/>
<dbReference type="Ensembl" id="ENSMUST00000239431.2">
    <property type="protein sequence ID" value="ENSMUSP00000159379.2"/>
    <property type="gene ID" value="ENSMUSG00000034708.13"/>
</dbReference>
<dbReference type="GeneID" id="14824"/>
<dbReference type="KEGG" id="mmu:14824"/>
<dbReference type="AGR" id="MGI:95832"/>
<dbReference type="CTD" id="2896"/>
<dbReference type="MGI" id="MGI:95832">
    <property type="gene designation" value="Grn"/>
</dbReference>
<dbReference type="VEuPathDB" id="HostDB:ENSMUSG00000034708"/>
<dbReference type="eggNOG" id="KOG4296">
    <property type="taxonomic scope" value="Eukaryota"/>
</dbReference>
<dbReference type="GeneTree" id="ENSGT00470000042293"/>
<dbReference type="InParanoid" id="P28798"/>
<dbReference type="OrthoDB" id="5854875at2759"/>
<dbReference type="Reactome" id="R-MMU-6798695">
    <property type="pathway name" value="Neutrophil degranulation"/>
</dbReference>
<dbReference type="ChiTaRS" id="Grn">
    <property type="organism name" value="mouse"/>
</dbReference>
<dbReference type="PRO" id="PR:P28798"/>
<dbReference type="Proteomes" id="UP000000589">
    <property type="component" value="Chromosome 11"/>
</dbReference>
<dbReference type="RNAct" id="P28798">
    <property type="molecule type" value="protein"/>
</dbReference>
<dbReference type="Bgee" id="ENSMUSG00000034708">
    <property type="expression patterns" value="Expressed in stroma of bone marrow and 276 other cell types or tissues"/>
</dbReference>
<dbReference type="ExpressionAtlas" id="P28798">
    <property type="expression patterns" value="baseline and differential"/>
</dbReference>
<dbReference type="GO" id="GO:0150053">
    <property type="term" value="C:cerebellar climbing fiber to Purkinje cell synapse"/>
    <property type="evidence" value="ECO:0000314"/>
    <property type="project" value="SynGO"/>
</dbReference>
<dbReference type="GO" id="GO:0005783">
    <property type="term" value="C:endoplasmic reticulum"/>
    <property type="evidence" value="ECO:0000314"/>
    <property type="project" value="UniProtKB"/>
</dbReference>
<dbReference type="GO" id="GO:0005576">
    <property type="term" value="C:extracellular region"/>
    <property type="evidence" value="ECO:0000314"/>
    <property type="project" value="UniProtKB"/>
</dbReference>
<dbReference type="GO" id="GO:0005615">
    <property type="term" value="C:extracellular space"/>
    <property type="evidence" value="ECO:0000314"/>
    <property type="project" value="MGI"/>
</dbReference>
<dbReference type="GO" id="GO:0005794">
    <property type="term" value="C:Golgi apparatus"/>
    <property type="evidence" value="ECO:0000314"/>
    <property type="project" value="UniProtKB"/>
</dbReference>
<dbReference type="GO" id="GO:0005770">
    <property type="term" value="C:late endosome"/>
    <property type="evidence" value="ECO:0000250"/>
    <property type="project" value="UniProtKB"/>
</dbReference>
<dbReference type="GO" id="GO:0005765">
    <property type="term" value="C:lysosomal membrane"/>
    <property type="evidence" value="ECO:0000250"/>
    <property type="project" value="UniProtKB"/>
</dbReference>
<dbReference type="GO" id="GO:0005764">
    <property type="term" value="C:lysosome"/>
    <property type="evidence" value="ECO:0000314"/>
    <property type="project" value="UniProtKB"/>
</dbReference>
<dbReference type="GO" id="GO:0016020">
    <property type="term" value="C:membrane"/>
    <property type="evidence" value="ECO:0000250"/>
    <property type="project" value="UniProtKB"/>
</dbReference>
<dbReference type="GO" id="GO:0005739">
    <property type="term" value="C:mitochondrion"/>
    <property type="evidence" value="ECO:0007005"/>
    <property type="project" value="MGI"/>
</dbReference>
<dbReference type="GO" id="GO:0005886">
    <property type="term" value="C:plasma membrane"/>
    <property type="evidence" value="ECO:0000250"/>
    <property type="project" value="UniProtKB"/>
</dbReference>
<dbReference type="GO" id="GO:0005802">
    <property type="term" value="C:trans-Golgi network"/>
    <property type="evidence" value="ECO:0000314"/>
    <property type="project" value="UniProtKB"/>
</dbReference>
<dbReference type="GO" id="GO:0031982">
    <property type="term" value="C:vesicle"/>
    <property type="evidence" value="ECO:0000314"/>
    <property type="project" value="UniProtKB"/>
</dbReference>
<dbReference type="GO" id="GO:0005125">
    <property type="term" value="F:cytokine activity"/>
    <property type="evidence" value="ECO:0007669"/>
    <property type="project" value="UniProtKB-KW"/>
</dbReference>
<dbReference type="GO" id="GO:0051087">
    <property type="term" value="F:protein-folding chaperone binding"/>
    <property type="evidence" value="ECO:0000250"/>
    <property type="project" value="UniProtKB"/>
</dbReference>
<dbReference type="GO" id="GO:0002265">
    <property type="term" value="P:astrocyte activation involved in immune response"/>
    <property type="evidence" value="ECO:0000315"/>
    <property type="project" value="UniProtKB"/>
</dbReference>
<dbReference type="GO" id="GO:0001835">
    <property type="term" value="P:blastocyst hatching"/>
    <property type="evidence" value="ECO:0000314"/>
    <property type="project" value="MGI"/>
</dbReference>
<dbReference type="GO" id="GO:0007566">
    <property type="term" value="P:embryo implantation"/>
    <property type="evidence" value="ECO:0000314"/>
    <property type="project" value="MGI"/>
</dbReference>
<dbReference type="GO" id="GO:0050673">
    <property type="term" value="P:epithelial cell proliferation"/>
    <property type="evidence" value="ECO:0000314"/>
    <property type="project" value="MGI"/>
</dbReference>
<dbReference type="GO" id="GO:0035641">
    <property type="term" value="P:locomotory exploration behavior"/>
    <property type="evidence" value="ECO:0000315"/>
    <property type="project" value="MGI"/>
</dbReference>
<dbReference type="GO" id="GO:0007042">
    <property type="term" value="P:lysosomal lumen acidification"/>
    <property type="evidence" value="ECO:0000250"/>
    <property type="project" value="UniProtKB"/>
</dbReference>
<dbReference type="GO" id="GO:1905146">
    <property type="term" value="P:lysosomal protein catabolic process"/>
    <property type="evidence" value="ECO:0000315"/>
    <property type="project" value="MGI"/>
</dbReference>
<dbReference type="GO" id="GO:0007041">
    <property type="term" value="P:lysosomal transport"/>
    <property type="evidence" value="ECO:0000315"/>
    <property type="project" value="UniProtKB"/>
</dbReference>
<dbReference type="GO" id="GO:0007040">
    <property type="term" value="P:lysosome organization"/>
    <property type="evidence" value="ECO:0000315"/>
    <property type="project" value="UniProtKB"/>
</dbReference>
<dbReference type="GO" id="GO:0099558">
    <property type="term" value="P:maintenance of synapse structure"/>
    <property type="evidence" value="ECO:0000314"/>
    <property type="project" value="SynGO"/>
</dbReference>
<dbReference type="GO" id="GO:0002282">
    <property type="term" value="P:microglial cell activation involved in immune response"/>
    <property type="evidence" value="ECO:0000315"/>
    <property type="project" value="UniProtKB"/>
</dbReference>
<dbReference type="GO" id="GO:0050728">
    <property type="term" value="P:negative regulation of inflammatory response"/>
    <property type="evidence" value="ECO:0000315"/>
    <property type="project" value="UniProtKB"/>
</dbReference>
<dbReference type="GO" id="GO:0045824">
    <property type="term" value="P:negative regulation of innate immune response"/>
    <property type="evidence" value="ECO:0000315"/>
    <property type="project" value="UniProtKB"/>
</dbReference>
<dbReference type="GO" id="GO:1903979">
    <property type="term" value="P:negative regulation of microglial cell activation"/>
    <property type="evidence" value="ECO:0000315"/>
    <property type="project" value="UniProtKB"/>
</dbReference>
<dbReference type="GO" id="GO:0043524">
    <property type="term" value="P:negative regulation of neuron apoptotic process"/>
    <property type="evidence" value="ECO:0000250"/>
    <property type="project" value="UniProtKB"/>
</dbReference>
<dbReference type="GO" id="GO:1902564">
    <property type="term" value="P:negative regulation of neutrophil activation"/>
    <property type="evidence" value="ECO:0000250"/>
    <property type="project" value="UniProtKB"/>
</dbReference>
<dbReference type="GO" id="GO:0060266">
    <property type="term" value="P:negative regulation of respiratory burst involved in inflammatory response"/>
    <property type="evidence" value="ECO:0000250"/>
    <property type="project" value="UniProtKB"/>
</dbReference>
<dbReference type="GO" id="GO:0045766">
    <property type="term" value="P:positive regulation of angiogenesis"/>
    <property type="evidence" value="ECO:0000314"/>
    <property type="project" value="UniProtKB"/>
</dbReference>
<dbReference type="GO" id="GO:1905247">
    <property type="term" value="P:positive regulation of aspartic-type peptidase activity"/>
    <property type="evidence" value="ECO:0000315"/>
    <property type="project" value="UniProtKB"/>
</dbReference>
<dbReference type="GO" id="GO:0048680">
    <property type="term" value="P:positive regulation of axon regeneration"/>
    <property type="evidence" value="ECO:0000315"/>
    <property type="project" value="UniProtKB"/>
</dbReference>
<dbReference type="GO" id="GO:0008284">
    <property type="term" value="P:positive regulation of cell population proliferation"/>
    <property type="evidence" value="ECO:0000314"/>
    <property type="project" value="UniProtKB"/>
</dbReference>
<dbReference type="GO" id="GO:1900426">
    <property type="term" value="P:positive regulation of defense response to bacterium"/>
    <property type="evidence" value="ECO:0000315"/>
    <property type="project" value="UniProtKB"/>
</dbReference>
<dbReference type="GO" id="GO:0010595">
    <property type="term" value="P:positive regulation of endothelial cell migration"/>
    <property type="evidence" value="ECO:0000314"/>
    <property type="project" value="UniProtKB"/>
</dbReference>
<dbReference type="GO" id="GO:0050679">
    <property type="term" value="P:positive regulation of epithelial cell proliferation"/>
    <property type="evidence" value="ECO:0000314"/>
    <property type="project" value="MGI"/>
</dbReference>
<dbReference type="GO" id="GO:0106016">
    <property type="term" value="P:positive regulation of inflammatory response to wounding"/>
    <property type="evidence" value="ECO:0000314"/>
    <property type="project" value="UniProtKB"/>
</dbReference>
<dbReference type="GO" id="GO:1905673">
    <property type="term" value="P:positive regulation of lysosome organization"/>
    <property type="evidence" value="ECO:0000314"/>
    <property type="project" value="UniProtKB"/>
</dbReference>
<dbReference type="GO" id="GO:0043525">
    <property type="term" value="P:positive regulation of neuron apoptotic process"/>
    <property type="evidence" value="ECO:0000315"/>
    <property type="project" value="UniProtKB"/>
</dbReference>
<dbReference type="GO" id="GO:1903334">
    <property type="term" value="P:positive regulation of protein folding"/>
    <property type="evidence" value="ECO:0000315"/>
    <property type="project" value="UniProtKB"/>
</dbReference>
<dbReference type="GO" id="GO:1904075">
    <property type="term" value="P:positive regulation of trophectodermal cell proliferation"/>
    <property type="evidence" value="ECO:0000314"/>
    <property type="project" value="MGI"/>
</dbReference>
<dbReference type="GO" id="GO:0050821">
    <property type="term" value="P:protein stabilization"/>
    <property type="evidence" value="ECO:0000250"/>
    <property type="project" value="UniProtKB"/>
</dbReference>
<dbReference type="GO" id="GO:1905671">
    <property type="term" value="P:regulation of lysosome organization"/>
    <property type="evidence" value="ECO:0000315"/>
    <property type="project" value="MGI"/>
</dbReference>
<dbReference type="GO" id="GO:0060041">
    <property type="term" value="P:retina development in camera-type eye"/>
    <property type="evidence" value="ECO:0000315"/>
    <property type="project" value="MGI"/>
</dbReference>
<dbReference type="GO" id="GO:0001834">
    <property type="term" value="P:trophectodermal cell proliferation"/>
    <property type="evidence" value="ECO:0000314"/>
    <property type="project" value="MGI"/>
</dbReference>
<dbReference type="FunFam" id="2.10.25.160:FF:000001">
    <property type="entry name" value="Granulin precursor"/>
    <property type="match status" value="5"/>
</dbReference>
<dbReference type="FunFam" id="2.10.25.160:FF:000004">
    <property type="entry name" value="Granulin precursor"/>
    <property type="match status" value="1"/>
</dbReference>
<dbReference type="FunFam" id="2.10.25.160:FF:000003">
    <property type="entry name" value="Progranulin"/>
    <property type="match status" value="1"/>
</dbReference>
<dbReference type="Gene3D" id="2.10.25.160">
    <property type="entry name" value="Granulin"/>
    <property type="match status" value="7"/>
</dbReference>
<dbReference type="InterPro" id="IPR000118">
    <property type="entry name" value="Granulin"/>
</dbReference>
<dbReference type="InterPro" id="IPR039036">
    <property type="entry name" value="Granulin_fam"/>
</dbReference>
<dbReference type="InterPro" id="IPR037277">
    <property type="entry name" value="Granulin_sf"/>
</dbReference>
<dbReference type="PANTHER" id="PTHR12274">
    <property type="entry name" value="GRANULIN"/>
    <property type="match status" value="1"/>
</dbReference>
<dbReference type="PANTHER" id="PTHR12274:SF3">
    <property type="entry name" value="PROGRANULIN"/>
    <property type="match status" value="1"/>
</dbReference>
<dbReference type="Pfam" id="PF00396">
    <property type="entry name" value="Granulin"/>
    <property type="match status" value="7"/>
</dbReference>
<dbReference type="SMART" id="SM00277">
    <property type="entry name" value="GRAN"/>
    <property type="match status" value="7"/>
</dbReference>
<dbReference type="SUPFAM" id="SSF57277">
    <property type="entry name" value="Granulin repeat"/>
    <property type="match status" value="6"/>
</dbReference>
<dbReference type="PROSITE" id="PS00799">
    <property type="entry name" value="GRANULINS"/>
    <property type="match status" value="7"/>
</dbReference>
<name>GRN_MOUSE</name>
<reference key="1">
    <citation type="journal article" date="1993" name="FEBS Lett.">
        <title>Exon/intron organization of the gene encoding the mouse epithelin/granulin precursor (acrogranin).</title>
        <authorList>
            <person name="Baba T."/>
            <person name="Nemoto H."/>
            <person name="Watanabe K."/>
            <person name="Arai Y."/>
            <person name="Gerton G.L."/>
        </authorList>
    </citation>
    <scope>NUCLEOTIDE SEQUENCE [GENOMIC DNA]</scope>
</reference>
<reference key="2">
    <citation type="journal article" date="1992" name="J. Biol. Chem.">
        <title>The epithelin precursor encodes two proteins with opposing activities on epithelial cell growth.</title>
        <authorList>
            <person name="Plowman G.D."/>
            <person name="Green J.M."/>
            <person name="Neubauer M.G."/>
            <person name="Buckley S.D."/>
            <person name="McDonald V.L."/>
            <person name="Todaro G.J."/>
            <person name="Shoyab M."/>
        </authorList>
    </citation>
    <scope>NUCLEOTIDE SEQUENCE [GENOMIC DNA]</scope>
    <source>
        <tissue>Kidney</tissue>
    </source>
</reference>
<reference key="3">
    <citation type="journal article" date="1993" name="Mol. Reprod. Dev.">
        <title>Acrogranin, an acrosomal cysteine-rich glycoprotein, is the precursor of the growth-modulating peptides, granulins, and epithelins, and is expressed in somatic as well as male germ cells.</title>
        <authorList>
            <person name="Baba T."/>
            <person name="Hoff H.B. III"/>
            <person name="Nemoto H."/>
            <person name="Lee H."/>
            <person name="Orth J."/>
            <person name="Arai Y."/>
            <person name="Gerton G.L."/>
        </authorList>
    </citation>
    <scope>NUCLEOTIDE SEQUENCE [MRNA]</scope>
</reference>
<reference key="4">
    <citation type="journal article" date="1993" name="J. Biol. Chem.">
        <title>Purification of an autocrine growth factor homologous with mouse epithelin precursor from a highly tumorigenic cell line.</title>
        <authorList>
            <person name="Zhou J."/>
            <person name="Gao G."/>
            <person name="Crabb J.W."/>
            <person name="Serrero G."/>
        </authorList>
    </citation>
    <scope>PROTEIN SEQUENCE OF 18-32; 116-127; 152-164; 198-226; 228-233; 259-280; 297-304 AND 421-430</scope>
    <scope>FUNCTION</scope>
    <scope>GLYCOSYLATION</scope>
    <scope>SUBCELLULAR LOCATION</scope>
</reference>
<reference key="5">
    <citation type="journal article" date="2002" name="Cell">
        <title>Conversion of proepithelin to epithelins: roles of SLPI and elastase in host defense and wound repair.</title>
        <authorList>
            <person name="Zhu J."/>
            <person name="Nathan C."/>
            <person name="Jin W."/>
            <person name="Sim D."/>
            <person name="Ashcroft G.S."/>
            <person name="Wahl S.M."/>
            <person name="Lacomis L."/>
            <person name="Erdjument-Bromage H."/>
            <person name="Tempst P."/>
            <person name="Wright C.D."/>
            <person name="Ding A."/>
        </authorList>
    </citation>
    <scope>INTERACTION WITH SLPI</scope>
</reference>
<reference key="6">
    <citation type="journal article" date="2003" name="Nat. Med.">
        <title>Progranulin is a mediator of the wound response.</title>
        <authorList>
            <person name="He Z."/>
            <person name="Ong C.H."/>
            <person name="Halper J."/>
            <person name="Bateman A."/>
        </authorList>
    </citation>
    <scope>INDUCTION</scope>
    <scope>TISSUE SPECIFICITY</scope>
    <scope>FUNCTION</scope>
</reference>
<reference key="7">
    <citation type="journal article" date="2010" name="Cell">
        <title>A tissue-specific atlas of mouse protein phosphorylation and expression.</title>
        <authorList>
            <person name="Huttlin E.L."/>
            <person name="Jedrychowski M.P."/>
            <person name="Elias J.E."/>
            <person name="Goswami T."/>
            <person name="Rad R."/>
            <person name="Beausoleil S.A."/>
            <person name="Villen J."/>
            <person name="Haas W."/>
            <person name="Sowa M.E."/>
            <person name="Gygi S.P."/>
        </authorList>
    </citation>
    <scope>IDENTIFICATION BY MASS SPECTROMETRY [LARGE SCALE ANALYSIS]</scope>
    <source>
        <tissue>Brain</tissue>
        <tissue>Kidney</tissue>
        <tissue>Lung</tissue>
        <tissue>Spleen</tissue>
    </source>
</reference>
<reference key="8">
    <citation type="journal article" date="2010" name="J. Exp. Med.">
        <title>Exaggerated inflammation, impaired host defense, and neuropathology in progranulin-deficient mice.</title>
        <authorList>
            <person name="Yin F."/>
            <person name="Banerjee R."/>
            <person name="Thomas B."/>
            <person name="Zhou P."/>
            <person name="Qian L."/>
            <person name="Jia T."/>
            <person name="Ma X."/>
            <person name="Ma Y."/>
            <person name="Iadecola C."/>
            <person name="Beal M.F."/>
            <person name="Nathan C."/>
            <person name="Ding A."/>
        </authorList>
    </citation>
    <scope>DISRUPTION PHENOTYPE</scope>
    <scope>FUNCTION</scope>
</reference>
<reference key="9">
    <citation type="journal article" date="2010" name="Neuron">
        <title>Sortilin-mediated endocytosis determines levels of the frontotemporal dementia protein, progranulin.</title>
        <authorList>
            <person name="Hu F."/>
            <person name="Padukkavidana T."/>
            <person name="Vaegter C.B."/>
            <person name="Brady O.A."/>
            <person name="Zheng Y."/>
            <person name="Mackenzie I.R."/>
            <person name="Feldman H.H."/>
            <person name="Nykjaer A."/>
            <person name="Strittmatter S.M."/>
        </authorList>
    </citation>
    <scope>INDUCTION</scope>
</reference>
<reference key="10">
    <citation type="journal article" date="2012" name="J. Clin. Invest.">
        <title>Progranulin deficiency promotes neuroinflammation and neuron loss following toxin-induced injury.</title>
        <authorList>
            <person name="Martens L.H."/>
            <person name="Zhang J."/>
            <person name="Barmada S.J."/>
            <person name="Zhou P."/>
            <person name="Kamiya S."/>
            <person name="Sun B."/>
            <person name="Min S.W."/>
            <person name="Gan L."/>
            <person name="Finkbeiner S."/>
            <person name="Huang E.J."/>
            <person name="Farese R.V. Jr."/>
        </authorList>
    </citation>
    <scope>TISSUE SPECIFICITY</scope>
    <scope>DISRUPTION PHENOTYPE</scope>
    <scope>FUNCTION</scope>
</reference>
<reference key="11">
    <citation type="journal article" date="2015" name="J. Cell Biol.">
        <title>Prosaposin facilitates sortilin-independent lysosomal trafficking of progranulin.</title>
        <authorList>
            <person name="Zhou X."/>
            <person name="Sun L."/>
            <person name="Bastos de Oliveira F."/>
            <person name="Qi X."/>
            <person name="Brown W.J."/>
            <person name="Smolka M.B."/>
            <person name="Sun Y."/>
            <person name="Hu F."/>
        </authorList>
    </citation>
    <scope>INTERACTION WITH PSAP</scope>
</reference>
<reference key="12">
    <citation type="journal article" date="2016" name="EBioMedicine">
        <title>Progranulin Recruits HSP70 to beta-Glucocerebrosidase and Is Therapeutic Against Gaucher Disease.</title>
        <authorList>
            <person name="Jian J."/>
            <person name="Tian Q.Y."/>
            <person name="Hettinghouse A."/>
            <person name="Zhao S."/>
            <person name="Liu H."/>
            <person name="Wei J."/>
            <person name="Grunig G."/>
            <person name="Zhang W."/>
            <person name="Setchell K.D.R."/>
            <person name="Sun Y."/>
            <person name="Overkleeft H.S."/>
            <person name="Chan G.L."/>
            <person name="Liu C.J."/>
        </authorList>
    </citation>
    <scope>INDUCTION</scope>
    <scope>TISSUE SPECIFICITY</scope>
    <scope>FUNCTION</scope>
    <scope>INTERACTION WITH GBA1</scope>
    <scope>SUBCELLULAR LOCATION</scope>
</reference>
<reference key="13">
    <citation type="journal article" date="2017" name="Hum. Mol. Genet.">
        <title>Progranulin regulates lysosomal function and biogenesis through acidification of lysosomes.</title>
        <authorList>
            <person name="Tanaka Y."/>
            <person name="Suzuki G."/>
            <person name="Matsuwaki T."/>
            <person name="Hosokawa M."/>
            <person name="Serrano G."/>
            <person name="Beach T.G."/>
            <person name="Yamanouchi K."/>
            <person name="Hasegawa M."/>
            <person name="Nishihara M."/>
        </authorList>
    </citation>
    <scope>FUNCTION</scope>
    <scope>SUBCELLULAR LOCATION</scope>
</reference>
<reference key="14">
    <citation type="journal article" date="2017" name="Hum. Mol. Genet.">
        <title>Progranulin functions as a cathepsin D chaperone to stimulate axonal outgrowth in vivo.</title>
        <authorList>
            <person name="Beel S."/>
            <person name="Moisse M."/>
            <person name="Damme M."/>
            <person name="De Muynck L."/>
            <person name="Robberecht W."/>
            <person name="Van Den Bosch L."/>
            <person name="Saftig P."/>
            <person name="Van Damme P."/>
        </authorList>
    </citation>
    <scope>INDUCTION</scope>
    <scope>DISRUPTION PHENOTYPE</scope>
    <scope>FUNCTION</scope>
</reference>
<reference key="15">
    <citation type="journal article" date="2017" name="Mol. Neurodegener.">
        <title>Lysosomal processing of progranulin.</title>
        <authorList>
            <person name="Zhou X."/>
            <person name="Paushter D.H."/>
            <person name="Feng T."/>
            <person name="Sun L."/>
            <person name="Reinheckel T."/>
            <person name="Hu F."/>
        </authorList>
    </citation>
    <scope>PROTEOLYTIC CLEAVAGE</scope>
</reference>
<reference key="16">
    <citation type="journal article" date="2017" name="Nat. Commun.">
        <title>Impaired prosaposin lysosomal trafficking in frontotemporal lobar degeneration due to progranulin mutations.</title>
        <authorList>
            <person name="Zhou X."/>
            <person name="Sun L."/>
            <person name="Bracko O."/>
            <person name="Choi J.W."/>
            <person name="Jia Y."/>
            <person name="Nana A.L."/>
            <person name="Brady O.A."/>
            <person name="Hernandez J.C.C."/>
            <person name="Nishimura N."/>
            <person name="Seeley W.W."/>
            <person name="Hu F."/>
        </authorList>
    </citation>
    <scope>TISSUE SPECIFICITY</scope>
    <scope>INDUCTION</scope>
    <scope>FUNCTION</scope>
    <scope>SUBCELLULAR LOCATION</scope>
</reference>
<reference key="17">
    <citation type="journal article" date="2017" name="Neuron">
        <title>Loss of TMEM106B ameliorates lysosomal and frontotemporal dementia-related phenotypes in progranulin-deficient mice.</title>
        <authorList>
            <person name="Klein Z.A."/>
            <person name="Takahashi H."/>
            <person name="Ma M."/>
            <person name="Stagi M."/>
            <person name="Zhou M."/>
            <person name="Lam T.T."/>
            <person name="Strittmatter S.M."/>
        </authorList>
    </citation>
    <scope>DISRUPTION PHENOTYPE</scope>
</reference>
<reference key="18">
    <citation type="journal article" date="2020" name="EMBO Rep.">
        <title>Loss of Tmem106b exacerbates FTLD pathologies and causes motor deficits in progranulin-deficient mice.</title>
        <authorList>
            <person name="Zhou X."/>
            <person name="Brooks M."/>
            <person name="Jiang P."/>
            <person name="Koga S."/>
            <person name="Zuberi A.R."/>
            <person name="Baker M.C."/>
            <person name="Parsons T.M."/>
            <person name="Castanedes-Casey M."/>
            <person name="Phillips V."/>
            <person name="Librero A.L."/>
            <person name="Kurti A."/>
            <person name="Fryer J.D."/>
            <person name="Bu G."/>
            <person name="Lutz C."/>
            <person name="Dickson D.W."/>
            <person name="Rademakers R."/>
        </authorList>
    </citation>
    <scope>DISRUPTION PHENOTYPE</scope>
</reference>
<reference key="19">
    <citation type="journal article" date="2020" name="EMBO Rep.">
        <title>Loss of TMEM106B and PGRN leads to severe lysosomal abnormalities and neurodegeneration in mice.</title>
        <authorList>
            <person name="Feng T."/>
            <person name="Mai S."/>
            <person name="Roscoe J.M."/>
            <person name="Sheng R.R."/>
            <person name="Ullah M."/>
            <person name="Zhang J."/>
            <person name="Katz I.I."/>
            <person name="Yu H."/>
            <person name="Xiong W."/>
            <person name="Hu F."/>
        </authorList>
    </citation>
    <scope>DISRUPTION PHENOTYPE</scope>
</reference>
<reference key="20">
    <citation type="journal article" date="2020" name="EMBO Rep.">
        <title>Loss of TMEM106B potentiates lysosomal and FTLD-like pathology in progranulin-deficient mice.</title>
        <authorList>
            <person name="Werner G."/>
            <person name="Damme M."/>
            <person name="Schludi M."/>
            <person name="Gnoerich J."/>
            <person name="Wind K."/>
            <person name="Fellerer K."/>
            <person name="Wefers B."/>
            <person name="Wurst W."/>
            <person name="Edbauer D."/>
            <person name="Brendel M."/>
            <person name="Haass C."/>
            <person name="Capell A."/>
        </authorList>
    </citation>
    <scope>DISRUPTION PHENOTYPE</scope>
</reference>
<comment type="function">
    <text evidence="3 5 7 9 10 11 12 18">Secreted protein that acts as a key regulator of lysosomal function and as a growth factor involved in inflammation, wound healing and cell proliferation (PubMed:12524533, PubMed:20026663, PubMed:23041626, PubMed:27789271, PubMed:28073925, PubMed:28453791, PubMed:28541286, PubMed:8496151). Regulates protein trafficking to lysosomes, and also the activity of lysosomal enzymes (PubMed:27789271, PubMed:28453791, PubMed:28541286). Also facilitates the acidification of lysosomes, causing degradation of mature CTSD by CTSB (PubMed:28073925). In addition, functions as a wound-related growth factor that acts directly on dermal fibroblasts and endothelial cells to promote division, migration and the formation of capillary-like tubule structures (PubMed:12524533). Also promotes epithelial cell proliferation by blocking TNF-mediated neutrophil activation preventing release of oxidants and proteases (PubMed:8496151). Moreover, modulates inflammation in neurons by preserving neurons survival, axonal outgrowth and neuronal integrity (PubMed:20026663, PubMed:23041626).</text>
</comment>
<comment type="function">
    <molecule>Granulin-3</molecule>
    <text evidence="1">Inhibits epithelial cell proliferation and induces epithelial cells to secrete IL-8.</text>
</comment>
<comment type="function">
    <molecule>Granulin-7</molecule>
    <text evidence="1">Stabilizes CTSD through interaction with CTSD leading to maintain its aspartic-type peptidase activity.</text>
</comment>
<comment type="subunit">
    <text evidence="1 4 8 9">Progranulin is secreted as a homodimer (By similarity). Interacts with SLPI; interaction protects progranulin from proteolysis (PubMed:12526812). Interacts (via region corresponding to granulin-7 peptide) with CTSD; stabilizes CTSD and increases its proteolytic activity. Interacts (via region corresponding to granulin-7 peptide) with SORT1; this interaction mediates endocytosis and lysosome delivery of progranulin; interaction occurs at the neuronal cell surface in a stressed nervous system (By similarity). Interacts with PSAP; facilitates lysosomal delivery of progranulin from the extracellular space and the biosynthetic pathway (PubMed:26370502). Forms a complex with PSAP and M6PR; PSAP bridges the binding between progranulin and M6PR. Forms a complex with PSAP and SORT1; progranulin bridges the interaction between PSAP and SORT1; facilitates lysosomal targeting of PSAP via SORT1; interaction enhances PSAP uptake in primary cortical neurons (By similarity). Interacts (via regions corresponding to granulin-2 and granulin-7 peptides) with GBA1; this interaction prevents aggregation of GBA1-SCARB2 complex via interaction with HSPA1A upon stress (PubMed:27789271). Interacts (via region corresponding to granulin-7 peptide) with HSPA1A; mediates recruitment of HSPA1A to GBA1 and prevents GBA1 aggregation in response to stress (By similarity).</text>
</comment>
<comment type="interaction">
    <interactant intactId="EBI-2365205">
        <id>P28798</id>
    </interactant>
    <interactant intactId="EBI-645756">
        <id>Q61207</id>
        <label>Psap</label>
    </interactant>
    <organismsDiffer>false</organismsDiffer>
    <experiments>4</experiments>
</comment>
<comment type="subcellular location">
    <subcellularLocation>
        <location evidence="10 12 18">Secreted</location>
    </subcellularLocation>
    <subcellularLocation>
        <location evidence="9 10">Lysosome</location>
    </subcellularLocation>
    <text evidence="1 9">Endocytosed by SORT1 and delivred to lysosomes. Targeted to lysosome by PSAP via M6PR and LRP1, in both biosynthetic and endocytic pathways (By similarity). Co-localized with GBA1 in the intracellular trafficking compartments until to lysosome (PubMed:27789271).</text>
</comment>
<comment type="tissue specificity">
    <text evidence="3 7 9 12">Highly expressed at the wound site and diminishes away from the wound. Not expressed in fibroblasts and endothelial cells in intact skin (PubMed:12524533). In adult brain, expressed primarily in neurons and in resting and reactive microglia (PubMed:23041626). Expressed in both neurons and microglia. Highly expressed in activated microglia in response to injury (PubMed:28541286). Expressed in macrophage (PubMed:27789271).</text>
</comment>
<comment type="induction">
    <text evidence="3 6 9 11 12">Injury-stimulated induction in the fibroblasts and endothelial cells and by inflammatory cells entering the wound (PubMed:12524533). Injury-stimulated induction in neurons (PubMed:28453791). Strongly induced in activated microglial cells that surround motor neurons after peripheral axonal injury, but not by astrocytes (PubMed:21092856). Up-regulated in response to a cortical injury. Up-regulated in activated glia during normal aging (PubMed:28541286). Induced in response to inflammation (PubMed:27789271).</text>
</comment>
<comment type="PTM">
    <text evidence="18">N-glycosylated.</text>
</comment>
<comment type="PTM">
    <text evidence="1 14">Cleaved by ELANE; proteolysis is blocked by SLPI and is concentration- and time-dependent and induces CXCL8/IL-8 production; granulin-3 and granulin-4 are resistant to ELANE (By similarity). Cleaved by CTSL in lysosome thus regulating the maturation and turnover of progranulin within the lysosome (PubMed:28835281).</text>
</comment>
<comment type="disruption phenotype">
    <text evidence="5 7 11 13 15 16 17">Young-adult knockout mice are healthy and fertile, grow normally and show no abnormalities in hematogram or serum chemistries. However they show increased inflammation levels, impaired host defense, and neuropathology (PubMed:20026663). Knockout animals displays neuronal outgrowth deficit. They exhibit increased neuron death and microglial activation upon central nervous system injury (CNS). Conditional knockout mice exhibit a reduction in dopaminergic neurons and increased microgliosis after CNS injury (PubMed:23041626). In neurons, conditional knockout mice show a significant delay in axonal regrowth and functional recovery after crush (PubMed:28453791). At 2 months of age, knockout animals exhibit up-regulation of the expression level of many lysosomal proteins, including that of cathepsin B/CTSB, cathepsin L/CTSL, dipeptidyl peptidase 2/DPP7 and LAMP1. At 4 months of age, knockout mice show increased locomotor activity in the open-field behavior test as compared to wild-type animals. They are also less anxious and disinhibited than wild-type littermates. Retinal degeneration can be observed as early as 5 months of age (PubMed:20026663, PubMed:23041626, PubMed:28453791). Mice deficient in both PGRN and TMEM106B are born at normal Mendelian frequency and do not show any obvious growth defects or body weight changes. At around 3.5 months of age, the animals develop severe ataxia, hindlimb weakness, reduced motor activity, altered clasping behavior and eventually premature death. Neuronal loss and severe microglia and astrocyte activation are observed in the spinal cord, retina, and brain (PubMed:32761777, PubMed:32852886, PubMed:32929860). Myelin degeneration occurs in the spinal cord (PubMed:32761777). Drastic autophagy and lysosomal abnormalities, as well as other pathological changes related to frontotemporal lobar degeneration (FTLD)/amyotrophic lateral sclerosis are observed (PubMed:32761777, PubMed:32852886, PubMed:32929860). Most studies consistently show that loss of TMEM106B exacerbates lysosome abnormalities found in GRN-single knockout animals, likely contributing to neuronal dysfunction and neuronal death (PubMed:32761777, PubMed:32852886, PubMed:32929860). However, one study reports that the expression levels of most lysosomal proteins are normalized in double knockout mice and comparable to those of wild-type animals and some behavioral phenotypes observed in GRN-single knockout mice, such as locomotor hyperactivity, disinhibition and retinal degeneration, are rescued in double knockout (PubMed:28728022).</text>
</comment>
<comment type="similarity">
    <text evidence="23">Belongs to the granulin family.</text>
</comment>